<feature type="chain" id="PRO_1000125728" description="Glucose-6-phosphate isomerase">
    <location>
        <begin position="1"/>
        <end position="530"/>
    </location>
</feature>
<feature type="active site" description="Proton donor" evidence="1">
    <location>
        <position position="322"/>
    </location>
</feature>
<feature type="active site" evidence="1">
    <location>
        <position position="351"/>
    </location>
</feature>
<feature type="active site" evidence="1">
    <location>
        <position position="455"/>
    </location>
</feature>
<keyword id="KW-0963">Cytoplasm</keyword>
<keyword id="KW-0312">Gluconeogenesis</keyword>
<keyword id="KW-0324">Glycolysis</keyword>
<keyword id="KW-0413">Isomerase</keyword>
<keyword id="KW-1185">Reference proteome</keyword>
<protein>
    <recommendedName>
        <fullName evidence="1">Glucose-6-phosphate isomerase</fullName>
        <shortName evidence="1">GPI</shortName>
        <ecNumber evidence="1">5.3.1.9</ecNumber>
    </recommendedName>
    <alternativeName>
        <fullName evidence="1">Phosphoglucose isomerase</fullName>
        <shortName evidence="1">PGI</shortName>
    </alternativeName>
    <alternativeName>
        <fullName evidence="1">Phosphohexose isomerase</fullName>
        <shortName evidence="1">PHI</shortName>
    </alternativeName>
</protein>
<dbReference type="EC" id="5.3.1.9" evidence="1"/>
<dbReference type="EMBL" id="CP001124">
    <property type="protein sequence ID" value="ACH40410.1"/>
    <property type="molecule type" value="Genomic_DNA"/>
</dbReference>
<dbReference type="RefSeq" id="WP_012531843.1">
    <property type="nucleotide sequence ID" value="NC_011146.1"/>
</dbReference>
<dbReference type="SMR" id="B5EBB8"/>
<dbReference type="STRING" id="404380.Gbem_3417"/>
<dbReference type="KEGG" id="gbm:Gbem_3417"/>
<dbReference type="eggNOG" id="COG0166">
    <property type="taxonomic scope" value="Bacteria"/>
</dbReference>
<dbReference type="HOGENOM" id="CLU_033288_0_0_7"/>
<dbReference type="OrthoDB" id="140919at2"/>
<dbReference type="UniPathway" id="UPA00109">
    <property type="reaction ID" value="UER00181"/>
</dbReference>
<dbReference type="UniPathway" id="UPA00138"/>
<dbReference type="Proteomes" id="UP000008825">
    <property type="component" value="Chromosome"/>
</dbReference>
<dbReference type="GO" id="GO:0005829">
    <property type="term" value="C:cytosol"/>
    <property type="evidence" value="ECO:0007669"/>
    <property type="project" value="TreeGrafter"/>
</dbReference>
<dbReference type="GO" id="GO:0097367">
    <property type="term" value="F:carbohydrate derivative binding"/>
    <property type="evidence" value="ECO:0007669"/>
    <property type="project" value="InterPro"/>
</dbReference>
<dbReference type="GO" id="GO:0004347">
    <property type="term" value="F:glucose-6-phosphate isomerase activity"/>
    <property type="evidence" value="ECO:0007669"/>
    <property type="project" value="UniProtKB-UniRule"/>
</dbReference>
<dbReference type="GO" id="GO:0048029">
    <property type="term" value="F:monosaccharide binding"/>
    <property type="evidence" value="ECO:0007669"/>
    <property type="project" value="TreeGrafter"/>
</dbReference>
<dbReference type="GO" id="GO:0006094">
    <property type="term" value="P:gluconeogenesis"/>
    <property type="evidence" value="ECO:0007669"/>
    <property type="project" value="UniProtKB-UniRule"/>
</dbReference>
<dbReference type="GO" id="GO:0051156">
    <property type="term" value="P:glucose 6-phosphate metabolic process"/>
    <property type="evidence" value="ECO:0007669"/>
    <property type="project" value="TreeGrafter"/>
</dbReference>
<dbReference type="GO" id="GO:0006096">
    <property type="term" value="P:glycolytic process"/>
    <property type="evidence" value="ECO:0007669"/>
    <property type="project" value="UniProtKB-UniRule"/>
</dbReference>
<dbReference type="CDD" id="cd05015">
    <property type="entry name" value="SIS_PGI_1"/>
    <property type="match status" value="1"/>
</dbReference>
<dbReference type="CDD" id="cd05016">
    <property type="entry name" value="SIS_PGI_2"/>
    <property type="match status" value="1"/>
</dbReference>
<dbReference type="FunFam" id="3.40.50.10490:FF:000021">
    <property type="entry name" value="Glucose-6-phosphate isomerase"/>
    <property type="match status" value="1"/>
</dbReference>
<dbReference type="FunFam" id="3.40.50.10490:FF:000023">
    <property type="entry name" value="Glucose-6-phosphate isomerase"/>
    <property type="match status" value="1"/>
</dbReference>
<dbReference type="Gene3D" id="3.40.50.10490">
    <property type="entry name" value="Glucose-6-phosphate isomerase like protein, domain 1"/>
    <property type="match status" value="2"/>
</dbReference>
<dbReference type="HAMAP" id="MF_00473">
    <property type="entry name" value="G6P_isomerase"/>
    <property type="match status" value="1"/>
</dbReference>
<dbReference type="InterPro" id="IPR001672">
    <property type="entry name" value="G6P_Isomerase"/>
</dbReference>
<dbReference type="InterPro" id="IPR018189">
    <property type="entry name" value="Phosphoglucose_isomerase_CS"/>
</dbReference>
<dbReference type="InterPro" id="IPR046348">
    <property type="entry name" value="SIS_dom_sf"/>
</dbReference>
<dbReference type="InterPro" id="IPR035476">
    <property type="entry name" value="SIS_PGI_1"/>
</dbReference>
<dbReference type="InterPro" id="IPR035482">
    <property type="entry name" value="SIS_PGI_2"/>
</dbReference>
<dbReference type="NCBIfam" id="NF010696">
    <property type="entry name" value="PRK14096.1"/>
    <property type="match status" value="1"/>
</dbReference>
<dbReference type="PANTHER" id="PTHR11469">
    <property type="entry name" value="GLUCOSE-6-PHOSPHATE ISOMERASE"/>
    <property type="match status" value="1"/>
</dbReference>
<dbReference type="PANTHER" id="PTHR11469:SF1">
    <property type="entry name" value="GLUCOSE-6-PHOSPHATE ISOMERASE"/>
    <property type="match status" value="1"/>
</dbReference>
<dbReference type="Pfam" id="PF00342">
    <property type="entry name" value="PGI"/>
    <property type="match status" value="2"/>
</dbReference>
<dbReference type="PRINTS" id="PR00662">
    <property type="entry name" value="G6PISOMERASE"/>
</dbReference>
<dbReference type="SUPFAM" id="SSF53697">
    <property type="entry name" value="SIS domain"/>
    <property type="match status" value="1"/>
</dbReference>
<dbReference type="PROSITE" id="PS00174">
    <property type="entry name" value="P_GLUCOSE_ISOMERASE_2"/>
    <property type="match status" value="1"/>
</dbReference>
<dbReference type="PROSITE" id="PS51463">
    <property type="entry name" value="P_GLUCOSE_ISOMERASE_3"/>
    <property type="match status" value="1"/>
</dbReference>
<name>G6PI_CITBB</name>
<comment type="function">
    <text evidence="1">Catalyzes the reversible isomerization of glucose-6-phosphate to fructose-6-phosphate.</text>
</comment>
<comment type="catalytic activity">
    <reaction evidence="1">
        <text>alpha-D-glucose 6-phosphate = beta-D-fructose 6-phosphate</text>
        <dbReference type="Rhea" id="RHEA:11816"/>
        <dbReference type="ChEBI" id="CHEBI:57634"/>
        <dbReference type="ChEBI" id="CHEBI:58225"/>
        <dbReference type="EC" id="5.3.1.9"/>
    </reaction>
</comment>
<comment type="pathway">
    <text evidence="1">Carbohydrate biosynthesis; gluconeogenesis.</text>
</comment>
<comment type="pathway">
    <text evidence="1">Carbohydrate degradation; glycolysis; D-glyceraldehyde 3-phosphate and glycerone phosphate from D-glucose: step 2/4.</text>
</comment>
<comment type="subcellular location">
    <subcellularLocation>
        <location evidence="1">Cytoplasm</location>
    </subcellularLocation>
</comment>
<comment type="similarity">
    <text evidence="1">Belongs to the GPI family.</text>
</comment>
<proteinExistence type="inferred from homology"/>
<gene>
    <name evidence="1" type="primary">pgi</name>
    <name type="ordered locus">Gbem_3417</name>
</gene>
<sequence>MQKQQLWERYKNLLYHDAELELSVDTSRIDFPEGFLEKMDPRLQQAYQEMEALEQGAVANPDEHRMVGHYWLRAPELAPEATLAEEITSTLAAIEAFASSVHGGNIAAPDGHRFTDLLIIGIGGSALGPQFLADSLGGPKDLLRIWFFDNTDPDGMDKVLSGIGAALKQTLVVVISKSGGTKETRNGMLEACQAFERAGLHFAGHAVAVTGSGSELDRTASRENWLGVFPMWDWVGGRTSVTSAVGLLPAALQGIDVDRLLAGARACDQKTRSRVTRENPAALLALSWFHATQGKGTRDMVLLPYKDRLLLFSRYLQQLIMESLGKGLDRDGKEVLQGIAVYGNKGSTDQHAYVQQLREGVHNFFVTFIEVLKDRQGPSMEVEPGATSGDYLSGFFQGTRSALYEKGRESVTITVRELSPASIGALIALYERAVGLYASLVNVNAYHQPGVEAGKEAAGAVLKLQGEIMELLRRQPNRDFTGEEMALALARPEEVETTFMILRHLAANGDHGVSVTEKDKIWENKYRSKD</sequence>
<organism>
    <name type="scientific">Citrifermentans bemidjiense (strain ATCC BAA-1014 / DSM 16622 / JCM 12645 / Bem)</name>
    <name type="common">Geobacter bemidjiensis</name>
    <dbReference type="NCBI Taxonomy" id="404380"/>
    <lineage>
        <taxon>Bacteria</taxon>
        <taxon>Pseudomonadati</taxon>
        <taxon>Thermodesulfobacteriota</taxon>
        <taxon>Desulfuromonadia</taxon>
        <taxon>Geobacterales</taxon>
        <taxon>Geobacteraceae</taxon>
        <taxon>Citrifermentans</taxon>
    </lineage>
</organism>
<accession>B5EBB8</accession>
<evidence type="ECO:0000255" key="1">
    <source>
        <dbReference type="HAMAP-Rule" id="MF_00473"/>
    </source>
</evidence>
<reference key="1">
    <citation type="submission" date="2008-07" db="EMBL/GenBank/DDBJ databases">
        <title>Complete sequence of Geobacter bemidjiensis BEM.</title>
        <authorList>
            <consortium name="US DOE Joint Genome Institute"/>
            <person name="Lucas S."/>
            <person name="Copeland A."/>
            <person name="Lapidus A."/>
            <person name="Glavina del Rio T."/>
            <person name="Dalin E."/>
            <person name="Tice H."/>
            <person name="Bruce D."/>
            <person name="Goodwin L."/>
            <person name="Pitluck S."/>
            <person name="Kiss H."/>
            <person name="Brettin T."/>
            <person name="Detter J.C."/>
            <person name="Han C."/>
            <person name="Kuske C.R."/>
            <person name="Schmutz J."/>
            <person name="Larimer F."/>
            <person name="Land M."/>
            <person name="Hauser L."/>
            <person name="Kyrpides N."/>
            <person name="Lykidis A."/>
            <person name="Lovley D."/>
            <person name="Richardson P."/>
        </authorList>
    </citation>
    <scope>NUCLEOTIDE SEQUENCE [LARGE SCALE GENOMIC DNA]</scope>
    <source>
        <strain>ATCC BAA-1014 / DSM 16622 / JCM 12645 / Bem</strain>
    </source>
</reference>